<organism>
    <name type="scientific">Listeria innocua serovar 6a (strain ATCC BAA-680 / CLIP 11262)</name>
    <dbReference type="NCBI Taxonomy" id="272626"/>
    <lineage>
        <taxon>Bacteria</taxon>
        <taxon>Bacillati</taxon>
        <taxon>Bacillota</taxon>
        <taxon>Bacilli</taxon>
        <taxon>Bacillales</taxon>
        <taxon>Listeriaceae</taxon>
        <taxon>Listeria</taxon>
    </lineage>
</organism>
<protein>
    <recommendedName>
        <fullName evidence="1">Anthranilate phosphoribosyltransferase</fullName>
        <ecNumber evidence="1">2.4.2.18</ecNumber>
    </recommendedName>
</protein>
<dbReference type="EC" id="2.4.2.18" evidence="1"/>
<dbReference type="EMBL" id="AL596169">
    <property type="protein sequence ID" value="CAC96903.1"/>
    <property type="molecule type" value="Genomic_DNA"/>
</dbReference>
<dbReference type="PIR" id="AG1641">
    <property type="entry name" value="AG1641"/>
</dbReference>
<dbReference type="RefSeq" id="WP_010991637.1">
    <property type="nucleotide sequence ID" value="NC_003212.1"/>
</dbReference>
<dbReference type="SMR" id="Q92B78"/>
<dbReference type="STRING" id="272626.gene:17566003"/>
<dbReference type="GeneID" id="93235054"/>
<dbReference type="KEGG" id="lin:trpD"/>
<dbReference type="eggNOG" id="COG0547">
    <property type="taxonomic scope" value="Bacteria"/>
</dbReference>
<dbReference type="HOGENOM" id="CLU_034315_2_1_9"/>
<dbReference type="OrthoDB" id="9806430at2"/>
<dbReference type="UniPathway" id="UPA00035">
    <property type="reaction ID" value="UER00041"/>
</dbReference>
<dbReference type="Proteomes" id="UP000002513">
    <property type="component" value="Chromosome"/>
</dbReference>
<dbReference type="GO" id="GO:0005829">
    <property type="term" value="C:cytosol"/>
    <property type="evidence" value="ECO:0007669"/>
    <property type="project" value="TreeGrafter"/>
</dbReference>
<dbReference type="GO" id="GO:0004048">
    <property type="term" value="F:anthranilate phosphoribosyltransferase activity"/>
    <property type="evidence" value="ECO:0007669"/>
    <property type="project" value="UniProtKB-UniRule"/>
</dbReference>
<dbReference type="GO" id="GO:0000287">
    <property type="term" value="F:magnesium ion binding"/>
    <property type="evidence" value="ECO:0007669"/>
    <property type="project" value="UniProtKB-UniRule"/>
</dbReference>
<dbReference type="GO" id="GO:0000162">
    <property type="term" value="P:L-tryptophan biosynthetic process"/>
    <property type="evidence" value="ECO:0007669"/>
    <property type="project" value="UniProtKB-UniRule"/>
</dbReference>
<dbReference type="FunFam" id="1.20.970.10:FF:000014">
    <property type="entry name" value="Anthranilate phosphoribosyltransferase"/>
    <property type="match status" value="1"/>
</dbReference>
<dbReference type="FunFam" id="3.40.1030.10:FF:000002">
    <property type="entry name" value="Anthranilate phosphoribosyltransferase"/>
    <property type="match status" value="1"/>
</dbReference>
<dbReference type="Gene3D" id="3.40.1030.10">
    <property type="entry name" value="Nucleoside phosphorylase/phosphoribosyltransferase catalytic domain"/>
    <property type="match status" value="1"/>
</dbReference>
<dbReference type="Gene3D" id="1.20.970.10">
    <property type="entry name" value="Transferase, Pyrimidine Nucleoside Phosphorylase, Chain C"/>
    <property type="match status" value="1"/>
</dbReference>
<dbReference type="HAMAP" id="MF_00211">
    <property type="entry name" value="TrpD"/>
    <property type="match status" value="1"/>
</dbReference>
<dbReference type="InterPro" id="IPR005940">
    <property type="entry name" value="Anthranilate_Pribosyl_Tfrase"/>
</dbReference>
<dbReference type="InterPro" id="IPR000312">
    <property type="entry name" value="Glycosyl_Trfase_fam3"/>
</dbReference>
<dbReference type="InterPro" id="IPR017459">
    <property type="entry name" value="Glycosyl_Trfase_fam3_N_dom"/>
</dbReference>
<dbReference type="InterPro" id="IPR036320">
    <property type="entry name" value="Glycosyl_Trfase_fam3_N_dom_sf"/>
</dbReference>
<dbReference type="InterPro" id="IPR035902">
    <property type="entry name" value="Nuc_phospho_transferase"/>
</dbReference>
<dbReference type="NCBIfam" id="TIGR01245">
    <property type="entry name" value="trpD"/>
    <property type="match status" value="1"/>
</dbReference>
<dbReference type="PANTHER" id="PTHR43285">
    <property type="entry name" value="ANTHRANILATE PHOSPHORIBOSYLTRANSFERASE"/>
    <property type="match status" value="1"/>
</dbReference>
<dbReference type="PANTHER" id="PTHR43285:SF2">
    <property type="entry name" value="ANTHRANILATE PHOSPHORIBOSYLTRANSFERASE"/>
    <property type="match status" value="1"/>
</dbReference>
<dbReference type="Pfam" id="PF02885">
    <property type="entry name" value="Glycos_trans_3N"/>
    <property type="match status" value="1"/>
</dbReference>
<dbReference type="Pfam" id="PF00591">
    <property type="entry name" value="Glycos_transf_3"/>
    <property type="match status" value="1"/>
</dbReference>
<dbReference type="SUPFAM" id="SSF52418">
    <property type="entry name" value="Nucleoside phosphorylase/phosphoribosyltransferase catalytic domain"/>
    <property type="match status" value="1"/>
</dbReference>
<dbReference type="SUPFAM" id="SSF47648">
    <property type="entry name" value="Nucleoside phosphorylase/phosphoribosyltransferase N-terminal domain"/>
    <property type="match status" value="1"/>
</dbReference>
<sequence>MEILLQKVYDQKNLSKAEMNIVATEIFEGRLSKTKIAAFLMALKVKGETAEEMAGIAEAMQQVAIQVDFPAGTAMDNCGTGGDKSNSFNISTTSAFVLAAAGIPVAKHGNRSISSRSGSADVCQELGIDINMRPEDMTYLLEKVGIAFLFAPHVHPNMKYVMDVRKELGTPTIFNLIGPLTNPVHLETQLMGIYRRDLIRQTAEVLGQLGRKRAVVLNGAGFMDEASLAGENHYALYESGEVHLYTLKPEEVGLASYPLEAIRGGDAKENAAILRSVLDGEPGAYLDTVLLNAGFGLFANGKVKTVKEGVDLARDLVRSGLAKQKLQDLITYQKEVLAK</sequence>
<evidence type="ECO:0000255" key="1">
    <source>
        <dbReference type="HAMAP-Rule" id="MF_00211"/>
    </source>
</evidence>
<keyword id="KW-0028">Amino-acid biosynthesis</keyword>
<keyword id="KW-0057">Aromatic amino acid biosynthesis</keyword>
<keyword id="KW-0328">Glycosyltransferase</keyword>
<keyword id="KW-0460">Magnesium</keyword>
<keyword id="KW-0479">Metal-binding</keyword>
<keyword id="KW-0808">Transferase</keyword>
<keyword id="KW-0822">Tryptophan biosynthesis</keyword>
<name>TRPD_LISIN</name>
<feature type="chain" id="PRO_0000154457" description="Anthranilate phosphoribosyltransferase">
    <location>
        <begin position="1"/>
        <end position="339"/>
    </location>
</feature>
<feature type="binding site" evidence="1">
    <location>
        <position position="79"/>
    </location>
    <ligand>
        <name>5-phospho-alpha-D-ribose 1-diphosphate</name>
        <dbReference type="ChEBI" id="CHEBI:58017"/>
    </ligand>
</feature>
<feature type="binding site" evidence="1">
    <location>
        <position position="79"/>
    </location>
    <ligand>
        <name>anthranilate</name>
        <dbReference type="ChEBI" id="CHEBI:16567"/>
        <label>1</label>
    </ligand>
</feature>
<feature type="binding site" evidence="1">
    <location>
        <begin position="82"/>
        <end position="83"/>
    </location>
    <ligand>
        <name>5-phospho-alpha-D-ribose 1-diphosphate</name>
        <dbReference type="ChEBI" id="CHEBI:58017"/>
    </ligand>
</feature>
<feature type="binding site" evidence="1">
    <location>
        <position position="87"/>
    </location>
    <ligand>
        <name>5-phospho-alpha-D-ribose 1-diphosphate</name>
        <dbReference type="ChEBI" id="CHEBI:58017"/>
    </ligand>
</feature>
<feature type="binding site" evidence="1">
    <location>
        <begin position="89"/>
        <end position="92"/>
    </location>
    <ligand>
        <name>5-phospho-alpha-D-ribose 1-diphosphate</name>
        <dbReference type="ChEBI" id="CHEBI:58017"/>
    </ligand>
</feature>
<feature type="binding site" evidence="1">
    <location>
        <position position="91"/>
    </location>
    <ligand>
        <name>Mg(2+)</name>
        <dbReference type="ChEBI" id="CHEBI:18420"/>
        <label>1</label>
    </ligand>
</feature>
<feature type="binding site" evidence="1">
    <location>
        <begin position="107"/>
        <end position="115"/>
    </location>
    <ligand>
        <name>5-phospho-alpha-D-ribose 1-diphosphate</name>
        <dbReference type="ChEBI" id="CHEBI:58017"/>
    </ligand>
</feature>
<feature type="binding site" evidence="1">
    <location>
        <position position="110"/>
    </location>
    <ligand>
        <name>anthranilate</name>
        <dbReference type="ChEBI" id="CHEBI:16567"/>
        <label>1</label>
    </ligand>
</feature>
<feature type="binding site" evidence="1">
    <location>
        <position position="119"/>
    </location>
    <ligand>
        <name>5-phospho-alpha-D-ribose 1-diphosphate</name>
        <dbReference type="ChEBI" id="CHEBI:58017"/>
    </ligand>
</feature>
<feature type="binding site" evidence="1">
    <location>
        <position position="165"/>
    </location>
    <ligand>
        <name>anthranilate</name>
        <dbReference type="ChEBI" id="CHEBI:16567"/>
        <label>2</label>
    </ligand>
</feature>
<feature type="binding site" evidence="1">
    <location>
        <position position="224"/>
    </location>
    <ligand>
        <name>Mg(2+)</name>
        <dbReference type="ChEBI" id="CHEBI:18420"/>
        <label>2</label>
    </ligand>
</feature>
<feature type="binding site" evidence="1">
    <location>
        <position position="225"/>
    </location>
    <ligand>
        <name>Mg(2+)</name>
        <dbReference type="ChEBI" id="CHEBI:18420"/>
        <label>1</label>
    </ligand>
</feature>
<feature type="binding site" evidence="1">
    <location>
        <position position="225"/>
    </location>
    <ligand>
        <name>Mg(2+)</name>
        <dbReference type="ChEBI" id="CHEBI:18420"/>
        <label>2</label>
    </ligand>
</feature>
<comment type="function">
    <text evidence="1">Catalyzes the transfer of the phosphoribosyl group of 5-phosphorylribose-1-pyrophosphate (PRPP) to anthranilate to yield N-(5'-phosphoribosyl)-anthranilate (PRA).</text>
</comment>
<comment type="catalytic activity">
    <reaction evidence="1">
        <text>N-(5-phospho-beta-D-ribosyl)anthranilate + diphosphate = 5-phospho-alpha-D-ribose 1-diphosphate + anthranilate</text>
        <dbReference type="Rhea" id="RHEA:11768"/>
        <dbReference type="ChEBI" id="CHEBI:16567"/>
        <dbReference type="ChEBI" id="CHEBI:18277"/>
        <dbReference type="ChEBI" id="CHEBI:33019"/>
        <dbReference type="ChEBI" id="CHEBI:58017"/>
        <dbReference type="EC" id="2.4.2.18"/>
    </reaction>
</comment>
<comment type="cofactor">
    <cofactor evidence="1">
        <name>Mg(2+)</name>
        <dbReference type="ChEBI" id="CHEBI:18420"/>
    </cofactor>
    <text evidence="1">Binds 2 magnesium ions per monomer.</text>
</comment>
<comment type="pathway">
    <text evidence="1">Amino-acid biosynthesis; L-tryptophan biosynthesis; L-tryptophan from chorismate: step 2/5.</text>
</comment>
<comment type="subunit">
    <text evidence="1">Homodimer.</text>
</comment>
<comment type="similarity">
    <text evidence="1">Belongs to the anthranilate phosphoribosyltransferase family.</text>
</comment>
<gene>
    <name evidence="1" type="primary">trpD</name>
    <name type="ordered locus">lin1672</name>
</gene>
<reference key="1">
    <citation type="journal article" date="2001" name="Science">
        <title>Comparative genomics of Listeria species.</title>
        <authorList>
            <person name="Glaser P."/>
            <person name="Frangeul L."/>
            <person name="Buchrieser C."/>
            <person name="Rusniok C."/>
            <person name="Amend A."/>
            <person name="Baquero F."/>
            <person name="Berche P."/>
            <person name="Bloecker H."/>
            <person name="Brandt P."/>
            <person name="Chakraborty T."/>
            <person name="Charbit A."/>
            <person name="Chetouani F."/>
            <person name="Couve E."/>
            <person name="de Daruvar A."/>
            <person name="Dehoux P."/>
            <person name="Domann E."/>
            <person name="Dominguez-Bernal G."/>
            <person name="Duchaud E."/>
            <person name="Durant L."/>
            <person name="Dussurget O."/>
            <person name="Entian K.-D."/>
            <person name="Fsihi H."/>
            <person name="Garcia-del Portillo F."/>
            <person name="Garrido P."/>
            <person name="Gautier L."/>
            <person name="Goebel W."/>
            <person name="Gomez-Lopez N."/>
            <person name="Hain T."/>
            <person name="Hauf J."/>
            <person name="Jackson D."/>
            <person name="Jones L.-M."/>
            <person name="Kaerst U."/>
            <person name="Kreft J."/>
            <person name="Kuhn M."/>
            <person name="Kunst F."/>
            <person name="Kurapkat G."/>
            <person name="Madueno E."/>
            <person name="Maitournam A."/>
            <person name="Mata Vicente J."/>
            <person name="Ng E."/>
            <person name="Nedjari H."/>
            <person name="Nordsiek G."/>
            <person name="Novella S."/>
            <person name="de Pablos B."/>
            <person name="Perez-Diaz J.-C."/>
            <person name="Purcell R."/>
            <person name="Remmel B."/>
            <person name="Rose M."/>
            <person name="Schlueter T."/>
            <person name="Simoes N."/>
            <person name="Tierrez A."/>
            <person name="Vazquez-Boland J.-A."/>
            <person name="Voss H."/>
            <person name="Wehland J."/>
            <person name="Cossart P."/>
        </authorList>
    </citation>
    <scope>NUCLEOTIDE SEQUENCE [LARGE SCALE GENOMIC DNA]</scope>
    <source>
        <strain>ATCC BAA-680 / CLIP 11262</strain>
    </source>
</reference>
<accession>Q92B78</accession>
<proteinExistence type="inferred from homology"/>